<gene>
    <name type="primary">CHRNG</name>
</gene>
<comment type="function">
    <text evidence="3">After binding acetylcholine, the AChR responds by an extensive change in conformation that affects all subunits and leads to opening of an ion-conducting channel across the plasma membrane.</text>
</comment>
<comment type="catalytic activity">
    <reaction evidence="3">
        <text>K(+)(in) = K(+)(out)</text>
        <dbReference type="Rhea" id="RHEA:29463"/>
        <dbReference type="ChEBI" id="CHEBI:29103"/>
    </reaction>
</comment>
<comment type="catalytic activity">
    <reaction evidence="3">
        <text>Na(+)(in) = Na(+)(out)</text>
        <dbReference type="Rhea" id="RHEA:34963"/>
        <dbReference type="ChEBI" id="CHEBI:29101"/>
    </reaction>
</comment>
<comment type="subunit">
    <text evidence="3">Pentamer of two alpha chains, and one each of the beta, delta, and gamma (in immature muscle) or epsilon (in mature muscle) chains.</text>
</comment>
<comment type="subcellular location">
    <subcellularLocation>
        <location>Postsynaptic cell membrane</location>
        <topology>Multi-pass membrane protein</topology>
    </subcellularLocation>
    <subcellularLocation>
        <location>Cell membrane</location>
        <topology>Multi-pass membrane protein</topology>
    </subcellularLocation>
</comment>
<comment type="similarity">
    <text evidence="4">Belongs to the ligand-gated ion channel (TC 1.A.9) family. Acetylcholine receptor (TC 1.A.9.1) subfamily. Gamma/CHRNG sub-subfamily.</text>
</comment>
<dbReference type="EMBL" id="M28307">
    <property type="protein sequence ID" value="AAA30351.1"/>
    <property type="molecule type" value="mRNA"/>
</dbReference>
<dbReference type="PIR" id="I45847">
    <property type="entry name" value="I45847"/>
</dbReference>
<dbReference type="RefSeq" id="NP_776698.1">
    <property type="nucleotide sequence ID" value="NM_174273.2"/>
</dbReference>
<dbReference type="PDB" id="9AVU">
    <property type="method" value="EM"/>
    <property type="resolution" value="2.45 A"/>
    <property type="chains" value="B=23-519"/>
</dbReference>
<dbReference type="PDB" id="9AWK">
    <property type="method" value="EM"/>
    <property type="resolution" value="2.14 A"/>
    <property type="chains" value="B=23-519"/>
</dbReference>
<dbReference type="PDBsum" id="9AVU"/>
<dbReference type="PDBsum" id="9AWK"/>
<dbReference type="EMDB" id="EMD-43923"/>
<dbReference type="EMDB" id="EMD-43926"/>
<dbReference type="SMR" id="P13536"/>
<dbReference type="CORUM" id="P13536"/>
<dbReference type="FunCoup" id="P13536">
    <property type="interactions" value="35"/>
</dbReference>
<dbReference type="STRING" id="9913.ENSBTAP00000048242"/>
<dbReference type="GlyCosmos" id="P13536">
    <property type="glycosylation" value="2 sites, No reported glycans"/>
</dbReference>
<dbReference type="GlyGen" id="P13536">
    <property type="glycosylation" value="2 sites"/>
</dbReference>
<dbReference type="PaxDb" id="9913-ENSBTAP00000048242"/>
<dbReference type="Ensembl" id="ENSBTAT00000053164.3">
    <property type="protein sequence ID" value="ENSBTAP00000048242.2"/>
    <property type="gene ID" value="ENSBTAG00000045943.3"/>
</dbReference>
<dbReference type="GeneID" id="281689"/>
<dbReference type="KEGG" id="bta:281689"/>
<dbReference type="CTD" id="1146"/>
<dbReference type="VEuPathDB" id="HostDB:ENSBTAG00000045943"/>
<dbReference type="VGNC" id="VGNC:27336">
    <property type="gene designation" value="CHRNG"/>
</dbReference>
<dbReference type="eggNOG" id="KOG3645">
    <property type="taxonomic scope" value="Eukaryota"/>
</dbReference>
<dbReference type="GeneTree" id="ENSGT00940000160041"/>
<dbReference type="HOGENOM" id="CLU_018074_1_4_1"/>
<dbReference type="InParanoid" id="P13536"/>
<dbReference type="OMA" id="CVDACNL"/>
<dbReference type="OrthoDB" id="5975154at2759"/>
<dbReference type="TreeFam" id="TF315605"/>
<dbReference type="Reactome" id="R-BTA-629587">
    <property type="pathway name" value="Highly sodium permeable postsynaptic acetylcholine nicotinic receptors"/>
</dbReference>
<dbReference type="Proteomes" id="UP000009136">
    <property type="component" value="Chromosome 2"/>
</dbReference>
<dbReference type="Bgee" id="ENSBTAG00000045943">
    <property type="expression patterns" value="Expressed in laryngeal cartilage and 22 other cell types or tissues"/>
</dbReference>
<dbReference type="GO" id="GO:0005892">
    <property type="term" value="C:acetylcholine-gated channel complex"/>
    <property type="evidence" value="ECO:0000318"/>
    <property type="project" value="GO_Central"/>
</dbReference>
<dbReference type="GO" id="GO:0031594">
    <property type="term" value="C:neuromuscular junction"/>
    <property type="evidence" value="ECO:0000314"/>
    <property type="project" value="SynGO"/>
</dbReference>
<dbReference type="GO" id="GO:0043005">
    <property type="term" value="C:neuron projection"/>
    <property type="evidence" value="ECO:0000318"/>
    <property type="project" value="GO_Central"/>
</dbReference>
<dbReference type="GO" id="GO:0005886">
    <property type="term" value="C:plasma membrane"/>
    <property type="evidence" value="ECO:0000318"/>
    <property type="project" value="GO_Central"/>
</dbReference>
<dbReference type="GO" id="GO:0045211">
    <property type="term" value="C:postsynaptic membrane"/>
    <property type="evidence" value="ECO:0007669"/>
    <property type="project" value="UniProtKB-SubCell"/>
</dbReference>
<dbReference type="GO" id="GO:0045202">
    <property type="term" value="C:synapse"/>
    <property type="evidence" value="ECO:0000318"/>
    <property type="project" value="GO_Central"/>
</dbReference>
<dbReference type="GO" id="GO:0015464">
    <property type="term" value="F:acetylcholine receptor activity"/>
    <property type="evidence" value="ECO:0000318"/>
    <property type="project" value="GO_Central"/>
</dbReference>
<dbReference type="GO" id="GO:0022848">
    <property type="term" value="F:acetylcholine-gated monoatomic cation-selective channel activity"/>
    <property type="evidence" value="ECO:0000318"/>
    <property type="project" value="GO_Central"/>
</dbReference>
<dbReference type="GO" id="GO:1904315">
    <property type="term" value="F:transmitter-gated monoatomic ion channel activity involved in regulation of postsynaptic membrane potential"/>
    <property type="evidence" value="ECO:0000314"/>
    <property type="project" value="SynGO"/>
</dbReference>
<dbReference type="GO" id="GO:0095500">
    <property type="term" value="P:acetylcholine receptor signaling pathway"/>
    <property type="evidence" value="ECO:0000318"/>
    <property type="project" value="GO_Central"/>
</dbReference>
<dbReference type="GO" id="GO:0007268">
    <property type="term" value="P:chemical synaptic transmission"/>
    <property type="evidence" value="ECO:0000318"/>
    <property type="project" value="GO_Central"/>
</dbReference>
<dbReference type="GO" id="GO:0051899">
    <property type="term" value="P:membrane depolarization"/>
    <property type="evidence" value="ECO:0000318"/>
    <property type="project" value="GO_Central"/>
</dbReference>
<dbReference type="GO" id="GO:0034220">
    <property type="term" value="P:monoatomic ion transmembrane transport"/>
    <property type="evidence" value="ECO:0000318"/>
    <property type="project" value="GO_Central"/>
</dbReference>
<dbReference type="CDD" id="cd19029">
    <property type="entry name" value="LGIC_ECD_nAChR_G"/>
    <property type="match status" value="1"/>
</dbReference>
<dbReference type="CDD" id="cd19064">
    <property type="entry name" value="LGIC_TM_nAChR"/>
    <property type="match status" value="1"/>
</dbReference>
<dbReference type="FunFam" id="1.20.58.390:FF:000010">
    <property type="entry name" value="Nicotinic acetylcholine receptor subunit epsilon"/>
    <property type="match status" value="1"/>
</dbReference>
<dbReference type="FunFam" id="1.20.58.390:FF:000036">
    <property type="entry name" value="Nicotinic acetylcholine receptor subunit gamma"/>
    <property type="match status" value="1"/>
</dbReference>
<dbReference type="FunFam" id="2.70.170.10:FF:000012">
    <property type="entry name" value="Nicotinic acetylcholine receptor subunit gamma"/>
    <property type="match status" value="1"/>
</dbReference>
<dbReference type="Gene3D" id="2.70.170.10">
    <property type="entry name" value="Neurotransmitter-gated ion-channel ligand-binding domain"/>
    <property type="match status" value="1"/>
</dbReference>
<dbReference type="Gene3D" id="1.20.58.390">
    <property type="entry name" value="Neurotransmitter-gated ion-channel transmembrane domain"/>
    <property type="match status" value="2"/>
</dbReference>
<dbReference type="InterPro" id="IPR006202">
    <property type="entry name" value="Neur_chan_lig-bd"/>
</dbReference>
<dbReference type="InterPro" id="IPR036734">
    <property type="entry name" value="Neur_chan_lig-bd_sf"/>
</dbReference>
<dbReference type="InterPro" id="IPR006201">
    <property type="entry name" value="Neur_channel"/>
</dbReference>
<dbReference type="InterPro" id="IPR036719">
    <property type="entry name" value="Neuro-gated_channel_TM_sf"/>
</dbReference>
<dbReference type="InterPro" id="IPR038050">
    <property type="entry name" value="Neuro_actylchol_rec"/>
</dbReference>
<dbReference type="InterPro" id="IPR006029">
    <property type="entry name" value="Neurotrans-gated_channel_TM"/>
</dbReference>
<dbReference type="InterPro" id="IPR018000">
    <property type="entry name" value="Neurotransmitter_ion_chnl_CS"/>
</dbReference>
<dbReference type="InterPro" id="IPR002394">
    <property type="entry name" value="Nicotinic_acetylcholine_rcpt"/>
</dbReference>
<dbReference type="PANTHER" id="PTHR18945">
    <property type="entry name" value="NEUROTRANSMITTER GATED ION CHANNEL"/>
    <property type="match status" value="1"/>
</dbReference>
<dbReference type="Pfam" id="PF02931">
    <property type="entry name" value="Neur_chan_LBD"/>
    <property type="match status" value="1"/>
</dbReference>
<dbReference type="Pfam" id="PF02932">
    <property type="entry name" value="Neur_chan_memb"/>
    <property type="match status" value="1"/>
</dbReference>
<dbReference type="PRINTS" id="PR00254">
    <property type="entry name" value="NICOTINICR"/>
</dbReference>
<dbReference type="PRINTS" id="PR00252">
    <property type="entry name" value="NRIONCHANNEL"/>
</dbReference>
<dbReference type="SUPFAM" id="SSF90112">
    <property type="entry name" value="Neurotransmitter-gated ion-channel transmembrane pore"/>
    <property type="match status" value="1"/>
</dbReference>
<dbReference type="SUPFAM" id="SSF63712">
    <property type="entry name" value="Nicotinic receptor ligand binding domain-like"/>
    <property type="match status" value="1"/>
</dbReference>
<dbReference type="PROSITE" id="PS00236">
    <property type="entry name" value="NEUROTR_ION_CHANNEL"/>
    <property type="match status" value="1"/>
</dbReference>
<reference key="1">
    <citation type="journal article" date="1984" name="Eur. J. Biochem.">
        <title>Primary structure of gamma subunit precursor of calf-muscle acetylcholine receptor deduced from the cDNA sequence.</title>
        <authorList>
            <person name="Takai T."/>
            <person name="Noda M."/>
            <person name="Furutani Y."/>
            <person name="Takahashi H."/>
            <person name="Notake M."/>
            <person name="Shimizu S."/>
            <person name="Kayano T."/>
            <person name="Tanabe T."/>
            <person name="Tanaka K."/>
            <person name="Hirose T."/>
            <person name="Inayama S."/>
            <person name="Numa S."/>
        </authorList>
    </citation>
    <scope>NUCLEOTIDE SEQUENCE [MRNA]</scope>
</reference>
<reference key="2">
    <citation type="journal article" date="1986" name="Nature">
        <title>Molecular distinction between fetal and adult forms of muscle acetylcholine receptor.</title>
        <authorList>
            <person name="Mishina M."/>
            <person name="Takai T."/>
            <person name="Imoto K."/>
            <person name="Noda M."/>
            <person name="Takahashi T."/>
            <person name="Numa S."/>
            <person name="Methfessel C."/>
            <person name="Sakmann B."/>
        </authorList>
    </citation>
    <scope>FUNCTION</scope>
    <scope>TRANSPORTER ACTIVITY</scope>
    <scope>SUBUNIT</scope>
</reference>
<accession>P13536</accession>
<sequence>MCGGQRPLFLLPLLAVCLGAKGRNQEERLLGDLMQGYNPHLRPAEHDSDVVNVSLKLTLTNLISLNEREEALTTNVWIEMQWCDYRLRWDPRDYGGLWVLRVPSTMVWRPDIVLENNVDGVFEVALYCNVLVSPDGCVYWLPPAIFRSSCPVSVTFFPFDWQNCSLIFQSQTYSTNEINLQLSQEDGQTIEWIFIDPEAFTENGEWAIRHRPAKMLLDEAAPAEEAGHQKVVFYLLIQRKPLFYVINIIAPCVLISSVAILIYFLPAKAGGQKCTVAINVLLAQTVFLFLVAKKVPETSQAVPLISKYLTFLLVVTILIVVNAVVVLNVSLRSPHTHSMARGVRKVFLRLLPQLLRMHVRPLAPVAVQDAHPRLQNGSSSGWPITAGEEVALCLPRSELLFRQRQRNGLVRAALEKLEKGPESGQSPEWCGSLKQAAPAIQACVEACNLIARARHQQTHFDSGNKEWFLVGRVLDRVCFLAMLSLFVCGTAGIFLMAHYNRVPALPFPGDPRSYLPSSD</sequence>
<name>ACHG_BOVIN</name>
<evidence type="ECO:0000250" key="1"/>
<evidence type="ECO:0000255" key="2"/>
<evidence type="ECO:0000269" key="3">
    <source>
    </source>
</evidence>
<evidence type="ECO:0000305" key="4"/>
<evidence type="ECO:0007829" key="5">
    <source>
        <dbReference type="PDB" id="9AVU"/>
    </source>
</evidence>
<evidence type="ECO:0007829" key="6">
    <source>
        <dbReference type="PDB" id="9AWK"/>
    </source>
</evidence>
<organism>
    <name type="scientific">Bos taurus</name>
    <name type="common">Bovine</name>
    <dbReference type="NCBI Taxonomy" id="9913"/>
    <lineage>
        <taxon>Eukaryota</taxon>
        <taxon>Metazoa</taxon>
        <taxon>Chordata</taxon>
        <taxon>Craniata</taxon>
        <taxon>Vertebrata</taxon>
        <taxon>Euteleostomi</taxon>
        <taxon>Mammalia</taxon>
        <taxon>Eutheria</taxon>
        <taxon>Laurasiatheria</taxon>
        <taxon>Artiodactyla</taxon>
        <taxon>Ruminantia</taxon>
        <taxon>Pecora</taxon>
        <taxon>Bovidae</taxon>
        <taxon>Bovinae</taxon>
        <taxon>Bos</taxon>
    </lineage>
</organism>
<keyword id="KW-0002">3D-structure</keyword>
<keyword id="KW-1003">Cell membrane</keyword>
<keyword id="KW-1015">Disulfide bond</keyword>
<keyword id="KW-0325">Glycoprotein</keyword>
<keyword id="KW-0407">Ion channel</keyword>
<keyword id="KW-0406">Ion transport</keyword>
<keyword id="KW-1071">Ligand-gated ion channel</keyword>
<keyword id="KW-0472">Membrane</keyword>
<keyword id="KW-0628">Postsynaptic cell membrane</keyword>
<keyword id="KW-0675">Receptor</keyword>
<keyword id="KW-1185">Reference proteome</keyword>
<keyword id="KW-0732">Signal</keyword>
<keyword id="KW-0770">Synapse</keyword>
<keyword id="KW-0812">Transmembrane</keyword>
<keyword id="KW-1133">Transmembrane helix</keyword>
<keyword id="KW-0813">Transport</keyword>
<protein>
    <recommendedName>
        <fullName>Acetylcholine receptor subunit gamma</fullName>
    </recommendedName>
</protein>
<feature type="signal peptide">
    <location>
        <begin position="1"/>
        <end position="22"/>
    </location>
</feature>
<feature type="chain" id="PRO_0000000333" description="Acetylcholine receptor subunit gamma">
    <location>
        <begin position="23"/>
        <end position="519"/>
    </location>
</feature>
<feature type="topological domain" description="Extracellular">
    <location>
        <begin position="23"/>
        <end position="240"/>
    </location>
</feature>
<feature type="transmembrane region" description="Helical">
    <location>
        <begin position="241"/>
        <end position="265"/>
    </location>
</feature>
<feature type="transmembrane region" description="Helical">
    <location>
        <begin position="274"/>
        <end position="292"/>
    </location>
</feature>
<feature type="transmembrane region" description="Helical">
    <location>
        <begin position="308"/>
        <end position="329"/>
    </location>
</feature>
<feature type="topological domain" description="Cytoplasmic">
    <location>
        <begin position="330"/>
        <end position="476"/>
    </location>
</feature>
<feature type="transmembrane region" description="Helical">
    <location>
        <begin position="477"/>
        <end position="497"/>
    </location>
</feature>
<feature type="glycosylation site" description="N-linked (GlcNAc...) asparagine" evidence="2">
    <location>
        <position position="52"/>
    </location>
</feature>
<feature type="glycosylation site" description="N-linked (GlcNAc...) asparagine" evidence="2">
    <location>
        <position position="163"/>
    </location>
</feature>
<feature type="disulfide bond" evidence="1">
    <location>
        <begin position="150"/>
        <end position="164"/>
    </location>
</feature>
<feature type="helix" evidence="6">
    <location>
        <begin position="24"/>
        <end position="33"/>
    </location>
</feature>
<feature type="turn" evidence="6">
    <location>
        <begin position="34"/>
        <end position="36"/>
    </location>
</feature>
<feature type="strand" evidence="6">
    <location>
        <begin position="51"/>
        <end position="66"/>
    </location>
</feature>
<feature type="turn" evidence="6">
    <location>
        <begin position="67"/>
        <end position="70"/>
    </location>
</feature>
<feature type="strand" evidence="6">
    <location>
        <begin position="71"/>
        <end position="83"/>
    </location>
</feature>
<feature type="helix" evidence="6">
    <location>
        <begin position="85"/>
        <end position="87"/>
    </location>
</feature>
<feature type="helix" evidence="6">
    <location>
        <begin position="91"/>
        <end position="94"/>
    </location>
</feature>
<feature type="strand" evidence="6">
    <location>
        <begin position="100"/>
        <end position="103"/>
    </location>
</feature>
<feature type="turn" evidence="6">
    <location>
        <begin position="104"/>
        <end position="106"/>
    </location>
</feature>
<feature type="strand" evidence="6">
    <location>
        <begin position="112"/>
        <end position="120"/>
    </location>
</feature>
<feature type="strand" evidence="6">
    <location>
        <begin position="129"/>
        <end position="132"/>
    </location>
</feature>
<feature type="strand" evidence="6">
    <location>
        <begin position="136"/>
        <end position="140"/>
    </location>
</feature>
<feature type="strand" evidence="6">
    <location>
        <begin position="143"/>
        <end position="149"/>
    </location>
</feature>
<feature type="turn" evidence="6">
    <location>
        <begin position="155"/>
        <end position="158"/>
    </location>
</feature>
<feature type="strand" evidence="6">
    <location>
        <begin position="161"/>
        <end position="172"/>
    </location>
</feature>
<feature type="turn" evidence="6">
    <location>
        <begin position="175"/>
        <end position="177"/>
    </location>
</feature>
<feature type="strand" evidence="6">
    <location>
        <begin position="178"/>
        <end position="182"/>
    </location>
</feature>
<feature type="turn" evidence="6">
    <location>
        <begin position="197"/>
        <end position="199"/>
    </location>
</feature>
<feature type="strand" evidence="6">
    <location>
        <begin position="204"/>
        <end position="210"/>
    </location>
</feature>
<feature type="strand" evidence="6">
    <location>
        <begin position="212"/>
        <end position="217"/>
    </location>
</feature>
<feature type="strand" evidence="6">
    <location>
        <begin position="223"/>
        <end position="227"/>
    </location>
</feature>
<feature type="strand" evidence="6">
    <location>
        <begin position="229"/>
        <end position="239"/>
    </location>
</feature>
<feature type="helix" evidence="6">
    <location>
        <begin position="242"/>
        <end position="247"/>
    </location>
</feature>
<feature type="helix" evidence="6">
    <location>
        <begin position="249"/>
        <end position="258"/>
    </location>
</feature>
<feature type="helix" evidence="6">
    <location>
        <begin position="259"/>
        <end position="264"/>
    </location>
</feature>
<feature type="turn" evidence="6">
    <location>
        <begin position="269"/>
        <end position="271"/>
    </location>
</feature>
<feature type="helix" evidence="6">
    <location>
        <begin position="273"/>
        <end position="292"/>
    </location>
</feature>
<feature type="helix" evidence="6">
    <location>
        <begin position="304"/>
        <end position="330"/>
    </location>
</feature>
<feature type="turn" evidence="6">
    <location>
        <begin position="334"/>
        <end position="336"/>
    </location>
</feature>
<feature type="helix" evidence="5">
    <location>
        <begin position="340"/>
        <end position="353"/>
    </location>
</feature>
<feature type="helix" evidence="6">
    <location>
        <begin position="439"/>
        <end position="498"/>
    </location>
</feature>
<feature type="strand" evidence="6">
    <location>
        <begin position="504"/>
        <end position="507"/>
    </location>
</feature>
<proteinExistence type="evidence at protein level"/>